<sequence length="1158" mass="130879">MLRNGAQNGNINSESHESFGKAAKGFRIFSSFSSSQKLFQRRSSGSITHSPTALSSTTSLNENDGNHFRPASSLSFSPSSLSRKDSGPGDGLEVNKKNNFYRRSSSTDDFGISHARSRKEIQSLGRPHTRQSFSVSDVSNGSSYPNIRKNSVHVNAPMPSFPEGSTAVLLKHHSGSKSASAISNIAPSHSNSTSSRRPYIHPAFLSQVAVEFRKRLNIGDRVKDGLLYKDAFLGSEAVDVLMHIVRTTDRNLALLLGRALDSQKMFHDVTYSHRLRDSLKEVYQYRRIISPPPGLSSMDSNGSSIENNFLYTKRRANTSDSFDSVLSDSSTTPTISSSVQVNSLAFITSSLSAITKEPEAPETEYNPHGVFTLLTECYSSTCSRNRLCYSISCPRRLEQQARLHLKVQPVLSGGSTSITDKQEEDHRLWSENVPKQVVDQIDVREWKRQEIIFEVIYTERDFVRDLEYIRDFWIKPLSTSNVIPENNRQQFIRCVFHNIMQIHAVNSRLSNALNRTQTLQPVVNTIGDLFLDYVPKFEPFIKYGANQAIAKFEFEREKSTNRNFANYVHEVERLRESRKLELNGYLTKPTTRLARYPLLLSGVLKYTDKDNPDTENIPRVIEMIREFLTKLNYETGKTENRLSLLQLNEQLSCSPADRAKLTLFDPSRLLIFKGVVKLKASSYSNGDTENDIHMFLLDNFLLLCKIKIQMKRRVHKLHLRPLPLELLSISYIEDSPSRGSLPRRPSSALLTNPISITKSNPPPVKAYGLQLVFIGARGFSISLYLNTLIARDQWKQHIEKQQDIIRKRHLVFESRGICCQSWFTGNKLLCAVAYDAGRKLLFGTYKGLYISSRKSNNGSCLEPIFKLQLPNISQLDVIEEHNVLLLLAEKILYELPLDALDSVEQINSKSLRRVTGHVSFVKTGFCMQRILVCAVKSTVLNTTLRIYEADRALKNKKTQSLKKPFGNQATLKIFTEVQMPMEALSVHFLKTKLCVGSFKGFDIISLENAVFQSLLNPADTSFRFLEKREDIRPIAMFRLRGEFLLCYSDFAFFVNTNGWKSRQSWMINWEGQPQGCALCYPYILAFEPDFIEIRNAETAELVQIIMGQNIKLLTDGRGLISEGGEILYSTEPIPFSSGENPIVHSLILPPANAAGPAL</sequence>
<protein>
    <recommendedName>
        <fullName>Rho1 guanine nucleotide exchange factor 2</fullName>
    </recommendedName>
</protein>
<proteinExistence type="evidence at protein level"/>
<comment type="function">
    <text evidence="4 5">Stimulates the exchange of Rho1 and Rho5 GDP-bound form into GTP-bound form. Controls septum formation, cell wall synthesis and localization of F-actin patches.</text>
</comment>
<comment type="subcellular location">
    <subcellularLocation>
        <location evidence="4 5 6">Cytoplasm</location>
    </subcellularLocation>
    <text>Septum. Localizes to cell tips during interphase and the septum in mitotic cells.</text>
</comment>
<organism>
    <name type="scientific">Schizosaccharomyces pombe (strain 972 / ATCC 24843)</name>
    <name type="common">Fission yeast</name>
    <dbReference type="NCBI Taxonomy" id="284812"/>
    <lineage>
        <taxon>Eukaryota</taxon>
        <taxon>Fungi</taxon>
        <taxon>Dikarya</taxon>
        <taxon>Ascomycota</taxon>
        <taxon>Taphrinomycotina</taxon>
        <taxon>Schizosaccharomycetes</taxon>
        <taxon>Schizosaccharomycetales</taxon>
        <taxon>Schizosaccharomycetaceae</taxon>
        <taxon>Schizosaccharomyces</taxon>
    </lineage>
</organism>
<accession>Q9UTR5</accession>
<dbReference type="EMBL" id="CU329670">
    <property type="protein sequence ID" value="CAB60236.1"/>
    <property type="molecule type" value="Genomic_DNA"/>
</dbReference>
<dbReference type="PIR" id="T50454">
    <property type="entry name" value="T50454"/>
</dbReference>
<dbReference type="RefSeq" id="NP_594853.1">
    <property type="nucleotide sequence ID" value="NM_001020282.2"/>
</dbReference>
<dbReference type="SMR" id="Q9UTR5"/>
<dbReference type="BioGRID" id="279393">
    <property type="interactions" value="12"/>
</dbReference>
<dbReference type="FunCoup" id="Q9UTR5">
    <property type="interactions" value="62"/>
</dbReference>
<dbReference type="STRING" id="284812.Q9UTR5"/>
<dbReference type="iPTMnet" id="Q9UTR5"/>
<dbReference type="PaxDb" id="4896-SPAC1006.06.1"/>
<dbReference type="EnsemblFungi" id="SPAC1006.06.1">
    <property type="protein sequence ID" value="SPAC1006.06.1:pep"/>
    <property type="gene ID" value="SPAC1006.06"/>
</dbReference>
<dbReference type="GeneID" id="2542953"/>
<dbReference type="KEGG" id="spo:2542953"/>
<dbReference type="PomBase" id="SPAC1006.06">
    <property type="gene designation" value="rgf2"/>
</dbReference>
<dbReference type="VEuPathDB" id="FungiDB:SPAC1006.06"/>
<dbReference type="eggNOG" id="KOG4305">
    <property type="taxonomic scope" value="Eukaryota"/>
</dbReference>
<dbReference type="HOGENOM" id="CLU_001251_2_1_1"/>
<dbReference type="InParanoid" id="Q9UTR5"/>
<dbReference type="OMA" id="CFRQKII"/>
<dbReference type="PhylomeDB" id="Q9UTR5"/>
<dbReference type="PRO" id="PR:Q9UTR5"/>
<dbReference type="Proteomes" id="UP000002485">
    <property type="component" value="Chromosome I"/>
</dbReference>
<dbReference type="GO" id="GO:0051285">
    <property type="term" value="C:cell cortex of cell tip"/>
    <property type="evidence" value="ECO:0000314"/>
    <property type="project" value="PomBase"/>
</dbReference>
<dbReference type="GO" id="GO:0032153">
    <property type="term" value="C:cell division site"/>
    <property type="evidence" value="ECO:0000318"/>
    <property type="project" value="GO_Central"/>
</dbReference>
<dbReference type="GO" id="GO:0071944">
    <property type="term" value="C:cell periphery"/>
    <property type="evidence" value="ECO:0000318"/>
    <property type="project" value="GO_Central"/>
</dbReference>
<dbReference type="GO" id="GO:0030428">
    <property type="term" value="C:cell septum"/>
    <property type="evidence" value="ECO:0000314"/>
    <property type="project" value="BHF-UCL"/>
</dbReference>
<dbReference type="GO" id="GO:0051286">
    <property type="term" value="C:cell tip"/>
    <property type="evidence" value="ECO:0000314"/>
    <property type="project" value="PomBase"/>
</dbReference>
<dbReference type="GO" id="GO:0005737">
    <property type="term" value="C:cytoplasm"/>
    <property type="evidence" value="ECO:0000318"/>
    <property type="project" value="GO_Central"/>
</dbReference>
<dbReference type="GO" id="GO:0005829">
    <property type="term" value="C:cytosol"/>
    <property type="evidence" value="ECO:0007005"/>
    <property type="project" value="PomBase"/>
</dbReference>
<dbReference type="GO" id="GO:0000935">
    <property type="term" value="C:division septum"/>
    <property type="evidence" value="ECO:0000314"/>
    <property type="project" value="PomBase"/>
</dbReference>
<dbReference type="GO" id="GO:0005632">
    <property type="term" value="C:inner layer of spore wall"/>
    <property type="evidence" value="ECO:0000314"/>
    <property type="project" value="PomBase"/>
</dbReference>
<dbReference type="GO" id="GO:0005085">
    <property type="term" value="F:guanyl-nucleotide exchange factor activity"/>
    <property type="evidence" value="ECO:0000316"/>
    <property type="project" value="PomBase"/>
</dbReference>
<dbReference type="GO" id="GO:0030476">
    <property type="term" value="P:ascospore wall assembly"/>
    <property type="evidence" value="ECO:0000315"/>
    <property type="project" value="BHF-UCL"/>
</dbReference>
<dbReference type="GO" id="GO:0000917">
    <property type="term" value="P:division septum assembly"/>
    <property type="evidence" value="ECO:0007669"/>
    <property type="project" value="UniProtKB-KW"/>
</dbReference>
<dbReference type="GO" id="GO:0009272">
    <property type="term" value="P:fungal-type cell wall biogenesis"/>
    <property type="evidence" value="ECO:0000316"/>
    <property type="project" value="PomBase"/>
</dbReference>
<dbReference type="GO" id="GO:0140748">
    <property type="term" value="P:positive regulation of regulation of ascospore wall (1-&gt;3)-beta-D-glucan biosynthetic process"/>
    <property type="evidence" value="ECO:0000315"/>
    <property type="project" value="PomBase"/>
</dbReference>
<dbReference type="GO" id="GO:0060622">
    <property type="term" value="P:regulation of ascospore wall beta-glucan biosynthetic process"/>
    <property type="evidence" value="ECO:0000315"/>
    <property type="project" value="BHF-UCL"/>
</dbReference>
<dbReference type="GO" id="GO:1903338">
    <property type="term" value="P:regulation of cell wall organization or biogenesis"/>
    <property type="evidence" value="ECO:0000318"/>
    <property type="project" value="GO_Central"/>
</dbReference>
<dbReference type="GO" id="GO:0007264">
    <property type="term" value="P:small GTPase-mediated signal transduction"/>
    <property type="evidence" value="ECO:0000318"/>
    <property type="project" value="GO_Central"/>
</dbReference>
<dbReference type="CDD" id="cd04435">
    <property type="entry name" value="DEP_fRom2"/>
    <property type="match status" value="1"/>
</dbReference>
<dbReference type="CDD" id="cd00160">
    <property type="entry name" value="RhoGEF"/>
    <property type="match status" value="1"/>
</dbReference>
<dbReference type="FunFam" id="2.30.29.30:FF:000405">
    <property type="entry name" value="RHO1 GDP-GTP exchange protein 2"/>
    <property type="match status" value="1"/>
</dbReference>
<dbReference type="Gene3D" id="1.20.900.10">
    <property type="entry name" value="Dbl homology (DH) domain"/>
    <property type="match status" value="1"/>
</dbReference>
<dbReference type="Gene3D" id="2.30.29.30">
    <property type="entry name" value="Pleckstrin-homology domain (PH domain)/Phosphotyrosine-binding domain (PTB)"/>
    <property type="match status" value="1"/>
</dbReference>
<dbReference type="Gene3D" id="1.10.10.10">
    <property type="entry name" value="Winged helix-like DNA-binding domain superfamily/Winged helix DNA-binding domain"/>
    <property type="match status" value="1"/>
</dbReference>
<dbReference type="InterPro" id="IPR001180">
    <property type="entry name" value="CNH_dom"/>
</dbReference>
<dbReference type="InterPro" id="IPR035899">
    <property type="entry name" value="DBL_dom_sf"/>
</dbReference>
<dbReference type="InterPro" id="IPR000591">
    <property type="entry name" value="DEP_dom"/>
</dbReference>
<dbReference type="InterPro" id="IPR000219">
    <property type="entry name" value="DH_dom"/>
</dbReference>
<dbReference type="InterPro" id="IPR011993">
    <property type="entry name" value="PH-like_dom_sf"/>
</dbReference>
<dbReference type="InterPro" id="IPR041675">
    <property type="entry name" value="PH_5"/>
</dbReference>
<dbReference type="InterPro" id="IPR052233">
    <property type="entry name" value="Rho-type_GEFs"/>
</dbReference>
<dbReference type="InterPro" id="IPR036388">
    <property type="entry name" value="WH-like_DNA-bd_sf"/>
</dbReference>
<dbReference type="InterPro" id="IPR036390">
    <property type="entry name" value="WH_DNA-bd_sf"/>
</dbReference>
<dbReference type="PANTHER" id="PTHR46572">
    <property type="entry name" value="RHO1 GDP-GTP EXCHANGE PROTEIN 1-RELATED"/>
    <property type="match status" value="1"/>
</dbReference>
<dbReference type="PANTHER" id="PTHR46572:SF3">
    <property type="entry name" value="RHO1 GUANINE NUCLEOTIDE EXCHANGE FACTOR 2"/>
    <property type="match status" value="1"/>
</dbReference>
<dbReference type="Pfam" id="PF00780">
    <property type="entry name" value="CNH"/>
    <property type="match status" value="1"/>
</dbReference>
<dbReference type="Pfam" id="PF00610">
    <property type="entry name" value="DEP"/>
    <property type="match status" value="1"/>
</dbReference>
<dbReference type="Pfam" id="PF15405">
    <property type="entry name" value="PH_5"/>
    <property type="match status" value="1"/>
</dbReference>
<dbReference type="Pfam" id="PF00621">
    <property type="entry name" value="RhoGEF"/>
    <property type="match status" value="1"/>
</dbReference>
<dbReference type="SMART" id="SM00036">
    <property type="entry name" value="CNH"/>
    <property type="match status" value="1"/>
</dbReference>
<dbReference type="SMART" id="SM00049">
    <property type="entry name" value="DEP"/>
    <property type="match status" value="1"/>
</dbReference>
<dbReference type="SMART" id="SM00325">
    <property type="entry name" value="RhoGEF"/>
    <property type="match status" value="1"/>
</dbReference>
<dbReference type="SUPFAM" id="SSF48065">
    <property type="entry name" value="DBL homology domain (DH-domain)"/>
    <property type="match status" value="1"/>
</dbReference>
<dbReference type="SUPFAM" id="SSF46785">
    <property type="entry name" value="Winged helix' DNA-binding domain"/>
    <property type="match status" value="1"/>
</dbReference>
<dbReference type="PROSITE" id="PS50219">
    <property type="entry name" value="CNH"/>
    <property type="match status" value="1"/>
</dbReference>
<dbReference type="PROSITE" id="PS50010">
    <property type="entry name" value="DH_2"/>
    <property type="match status" value="1"/>
</dbReference>
<feature type="chain" id="PRO_0000080971" description="Rho1 guanine nucleotide exchange factor 2">
    <location>
        <begin position="1"/>
        <end position="1158"/>
    </location>
</feature>
<feature type="domain" description="DH" evidence="1">
    <location>
        <begin position="447"/>
        <end position="634"/>
    </location>
</feature>
<feature type="domain" description="PH">
    <location>
        <begin position="670"/>
        <end position="805"/>
    </location>
</feature>
<feature type="domain" description="CNH" evidence="2">
    <location>
        <begin position="825"/>
        <end position="1120"/>
    </location>
</feature>
<feature type="region of interest" description="Disordered" evidence="3">
    <location>
        <begin position="42"/>
        <end position="141"/>
    </location>
</feature>
<feature type="compositionally biased region" description="Polar residues" evidence="3">
    <location>
        <begin position="45"/>
        <end position="63"/>
    </location>
</feature>
<feature type="compositionally biased region" description="Low complexity" evidence="3">
    <location>
        <begin position="68"/>
        <end position="81"/>
    </location>
</feature>
<feature type="compositionally biased region" description="Polar residues" evidence="3">
    <location>
        <begin position="97"/>
        <end position="108"/>
    </location>
</feature>
<feature type="compositionally biased region" description="Low complexity" evidence="3">
    <location>
        <begin position="132"/>
        <end position="141"/>
    </location>
</feature>
<feature type="modified residue" description="Phosphoserine" evidence="7">
    <location>
        <position position="746"/>
    </location>
</feature>
<feature type="modified residue" description="Phosphoserine" evidence="7">
    <location>
        <position position="747"/>
    </location>
</feature>
<name>RGF2_SCHPO</name>
<gene>
    <name type="primary">rgf2</name>
    <name type="ORF">SPAC1006.06</name>
</gene>
<evidence type="ECO:0000255" key="1">
    <source>
        <dbReference type="PROSITE-ProRule" id="PRU00062"/>
    </source>
</evidence>
<evidence type="ECO:0000255" key="2">
    <source>
        <dbReference type="PROSITE-ProRule" id="PRU00795"/>
    </source>
</evidence>
<evidence type="ECO:0000256" key="3">
    <source>
        <dbReference type="SAM" id="MobiDB-lite"/>
    </source>
</evidence>
<evidence type="ECO:0000269" key="4">
    <source>
    </source>
</evidence>
<evidence type="ECO:0000269" key="5">
    <source>
    </source>
</evidence>
<evidence type="ECO:0000269" key="6">
    <source>
    </source>
</evidence>
<evidence type="ECO:0000269" key="7">
    <source>
    </source>
</evidence>
<reference key="1">
    <citation type="journal article" date="2002" name="Nature">
        <title>The genome sequence of Schizosaccharomyces pombe.</title>
        <authorList>
            <person name="Wood V."/>
            <person name="Gwilliam R."/>
            <person name="Rajandream M.A."/>
            <person name="Lyne M.H."/>
            <person name="Lyne R."/>
            <person name="Stewart A."/>
            <person name="Sgouros J.G."/>
            <person name="Peat N."/>
            <person name="Hayles J."/>
            <person name="Baker S.G."/>
            <person name="Basham D."/>
            <person name="Bowman S."/>
            <person name="Brooks K."/>
            <person name="Brown D."/>
            <person name="Brown S."/>
            <person name="Chillingworth T."/>
            <person name="Churcher C.M."/>
            <person name="Collins M."/>
            <person name="Connor R."/>
            <person name="Cronin A."/>
            <person name="Davis P."/>
            <person name="Feltwell T."/>
            <person name="Fraser A."/>
            <person name="Gentles S."/>
            <person name="Goble A."/>
            <person name="Hamlin N."/>
            <person name="Harris D.E."/>
            <person name="Hidalgo J."/>
            <person name="Hodgson G."/>
            <person name="Holroyd S."/>
            <person name="Hornsby T."/>
            <person name="Howarth S."/>
            <person name="Huckle E.J."/>
            <person name="Hunt S."/>
            <person name="Jagels K."/>
            <person name="James K.D."/>
            <person name="Jones L."/>
            <person name="Jones M."/>
            <person name="Leather S."/>
            <person name="McDonald S."/>
            <person name="McLean J."/>
            <person name="Mooney P."/>
            <person name="Moule S."/>
            <person name="Mungall K.L."/>
            <person name="Murphy L.D."/>
            <person name="Niblett D."/>
            <person name="Odell C."/>
            <person name="Oliver K."/>
            <person name="O'Neil S."/>
            <person name="Pearson D."/>
            <person name="Quail M.A."/>
            <person name="Rabbinowitsch E."/>
            <person name="Rutherford K.M."/>
            <person name="Rutter S."/>
            <person name="Saunders D."/>
            <person name="Seeger K."/>
            <person name="Sharp S."/>
            <person name="Skelton J."/>
            <person name="Simmonds M.N."/>
            <person name="Squares R."/>
            <person name="Squares S."/>
            <person name="Stevens K."/>
            <person name="Taylor K."/>
            <person name="Taylor R.G."/>
            <person name="Tivey A."/>
            <person name="Walsh S.V."/>
            <person name="Warren T."/>
            <person name="Whitehead S."/>
            <person name="Woodward J.R."/>
            <person name="Volckaert G."/>
            <person name="Aert R."/>
            <person name="Robben J."/>
            <person name="Grymonprez B."/>
            <person name="Weltjens I."/>
            <person name="Vanstreels E."/>
            <person name="Rieger M."/>
            <person name="Schaefer M."/>
            <person name="Mueller-Auer S."/>
            <person name="Gabel C."/>
            <person name="Fuchs M."/>
            <person name="Duesterhoeft A."/>
            <person name="Fritzc C."/>
            <person name="Holzer E."/>
            <person name="Moestl D."/>
            <person name="Hilbert H."/>
            <person name="Borzym K."/>
            <person name="Langer I."/>
            <person name="Beck A."/>
            <person name="Lehrach H."/>
            <person name="Reinhardt R."/>
            <person name="Pohl T.M."/>
            <person name="Eger P."/>
            <person name="Zimmermann W."/>
            <person name="Wedler H."/>
            <person name="Wambutt R."/>
            <person name="Purnelle B."/>
            <person name="Goffeau A."/>
            <person name="Cadieu E."/>
            <person name="Dreano S."/>
            <person name="Gloux S."/>
            <person name="Lelaure V."/>
            <person name="Mottier S."/>
            <person name="Galibert F."/>
            <person name="Aves S.J."/>
            <person name="Xiang Z."/>
            <person name="Hunt C."/>
            <person name="Moore K."/>
            <person name="Hurst S.M."/>
            <person name="Lucas M."/>
            <person name="Rochet M."/>
            <person name="Gaillardin C."/>
            <person name="Tallada V.A."/>
            <person name="Garzon A."/>
            <person name="Thode G."/>
            <person name="Daga R.R."/>
            <person name="Cruzado L."/>
            <person name="Jimenez J."/>
            <person name="Sanchez M."/>
            <person name="del Rey F."/>
            <person name="Benito J."/>
            <person name="Dominguez A."/>
            <person name="Revuelta J.L."/>
            <person name="Moreno S."/>
            <person name="Armstrong J."/>
            <person name="Forsburg S.L."/>
            <person name="Cerutti L."/>
            <person name="Lowe T."/>
            <person name="McCombie W.R."/>
            <person name="Paulsen I."/>
            <person name="Potashkin J."/>
            <person name="Shpakovski G.V."/>
            <person name="Ussery D."/>
            <person name="Barrell B.G."/>
            <person name="Nurse P."/>
        </authorList>
    </citation>
    <scope>NUCLEOTIDE SEQUENCE [LARGE SCALE GENOMIC DNA]</scope>
    <source>
        <strain>972 / ATCC 24843</strain>
    </source>
</reference>
<reference key="2">
    <citation type="journal article" date="2005" name="Genes Cells">
        <title>Rho1-GEFs Rgf1 and Rgf2 are involved in formation of cell wall and septum, while Rgf3 is involved in cytokinesis in fission yeast.</title>
        <authorList>
            <person name="Mutoh T."/>
            <person name="Nakano K."/>
            <person name="Mabuchi I."/>
        </authorList>
    </citation>
    <scope>FUNCTION</scope>
    <scope>SUBCELLULAR LOCATION</scope>
</reference>
<reference key="3">
    <citation type="journal article" date="2005" name="J. Cell Sci.">
        <title>Cell wall remodeling at the fission yeast cell division site requires the Rho-GEF Rgf3p.</title>
        <authorList>
            <person name="Morrell-Falvey J.L."/>
            <person name="Ren L."/>
            <person name="Feoktistova A."/>
            <person name="Haese G.D."/>
            <person name="Gould K.L."/>
        </authorList>
    </citation>
    <scope>FUNCTION</scope>
    <scope>SUBCELLULAR LOCATION</scope>
</reference>
<reference key="4">
    <citation type="journal article" date="2006" name="Nat. Biotechnol.">
        <title>ORFeome cloning and global analysis of protein localization in the fission yeast Schizosaccharomyces pombe.</title>
        <authorList>
            <person name="Matsuyama A."/>
            <person name="Arai R."/>
            <person name="Yashiroda Y."/>
            <person name="Shirai A."/>
            <person name="Kamata A."/>
            <person name="Sekido S."/>
            <person name="Kobayashi Y."/>
            <person name="Hashimoto A."/>
            <person name="Hamamoto M."/>
            <person name="Hiraoka Y."/>
            <person name="Horinouchi S."/>
            <person name="Yoshida M."/>
        </authorList>
    </citation>
    <scope>SUBCELLULAR LOCATION [LARGE SCALE ANALYSIS]</scope>
</reference>
<reference key="5">
    <citation type="journal article" date="2008" name="J. Proteome Res.">
        <title>Phosphoproteome analysis of fission yeast.</title>
        <authorList>
            <person name="Wilson-Grady J.T."/>
            <person name="Villen J."/>
            <person name="Gygi S.P."/>
        </authorList>
    </citation>
    <scope>PHOSPHORYLATION [LARGE SCALE ANALYSIS] AT SER-746 AND SER-747</scope>
    <scope>IDENTIFICATION BY MASS SPECTROMETRY</scope>
</reference>
<keyword id="KW-0131">Cell cycle</keyword>
<keyword id="KW-0132">Cell division</keyword>
<keyword id="KW-0963">Cytoplasm</keyword>
<keyword id="KW-0344">Guanine-nucleotide releasing factor</keyword>
<keyword id="KW-0597">Phosphoprotein</keyword>
<keyword id="KW-1185">Reference proteome</keyword>
<keyword id="KW-0717">Septation</keyword>